<dbReference type="EC" id="7.-.-.-" evidence="1"/>
<dbReference type="EMBL" id="L42023">
    <property type="protein sequence ID" value="AAC23331.1"/>
    <property type="molecule type" value="Genomic_DNA"/>
</dbReference>
<dbReference type="PIR" id="E64136">
    <property type="entry name" value="E64136"/>
</dbReference>
<dbReference type="RefSeq" id="NP_439827.1">
    <property type="nucleotide sequence ID" value="NC_000907.1"/>
</dbReference>
<dbReference type="SMR" id="P71397"/>
<dbReference type="STRING" id="71421.HI_1685"/>
<dbReference type="EnsemblBacteria" id="AAC23331">
    <property type="protein sequence ID" value="AAC23331"/>
    <property type="gene ID" value="HI_1685"/>
</dbReference>
<dbReference type="KEGG" id="hin:HI_1685"/>
<dbReference type="PATRIC" id="fig|71421.8.peg.1764"/>
<dbReference type="eggNOG" id="COG4656">
    <property type="taxonomic scope" value="Bacteria"/>
</dbReference>
<dbReference type="HOGENOM" id="CLU_010808_2_1_6"/>
<dbReference type="OrthoDB" id="9767754at2"/>
<dbReference type="PhylomeDB" id="P71397"/>
<dbReference type="BioCyc" id="HINF71421:G1GJ1-1701-MONOMER"/>
<dbReference type="Proteomes" id="UP000000579">
    <property type="component" value="Chromosome"/>
</dbReference>
<dbReference type="GO" id="GO:0005886">
    <property type="term" value="C:plasma membrane"/>
    <property type="evidence" value="ECO:0007669"/>
    <property type="project" value="UniProtKB-SubCell"/>
</dbReference>
<dbReference type="GO" id="GO:0051539">
    <property type="term" value="F:4 iron, 4 sulfur cluster binding"/>
    <property type="evidence" value="ECO:0007669"/>
    <property type="project" value="UniProtKB-KW"/>
</dbReference>
<dbReference type="GO" id="GO:0009055">
    <property type="term" value="F:electron transfer activity"/>
    <property type="evidence" value="ECO:0007669"/>
    <property type="project" value="InterPro"/>
</dbReference>
<dbReference type="GO" id="GO:0046872">
    <property type="term" value="F:metal ion binding"/>
    <property type="evidence" value="ECO:0007669"/>
    <property type="project" value="UniProtKB-KW"/>
</dbReference>
<dbReference type="GO" id="GO:0022900">
    <property type="term" value="P:electron transport chain"/>
    <property type="evidence" value="ECO:0007669"/>
    <property type="project" value="UniProtKB-UniRule"/>
</dbReference>
<dbReference type="Gene3D" id="3.30.70.20">
    <property type="match status" value="1"/>
</dbReference>
<dbReference type="Gene3D" id="3.40.50.11540">
    <property type="entry name" value="NADH-ubiquinone oxidoreductase 51kDa subunit"/>
    <property type="match status" value="1"/>
</dbReference>
<dbReference type="HAMAP" id="MF_00461">
    <property type="entry name" value="RsxC_RnfC"/>
    <property type="match status" value="1"/>
</dbReference>
<dbReference type="InterPro" id="IPR017896">
    <property type="entry name" value="4Fe4S_Fe-S-bd"/>
</dbReference>
<dbReference type="InterPro" id="IPR017900">
    <property type="entry name" value="4Fe4S_Fe_S_CS"/>
</dbReference>
<dbReference type="InterPro" id="IPR010208">
    <property type="entry name" value="Ion_transpt_RnfC/RsxC"/>
</dbReference>
<dbReference type="InterPro" id="IPR011538">
    <property type="entry name" value="Nuo51_FMN-bd"/>
</dbReference>
<dbReference type="InterPro" id="IPR037225">
    <property type="entry name" value="Nuo51_FMN-bd_sf"/>
</dbReference>
<dbReference type="InterPro" id="IPR026902">
    <property type="entry name" value="RnfC_N"/>
</dbReference>
<dbReference type="NCBIfam" id="NF003454">
    <property type="entry name" value="PRK05035.1"/>
    <property type="match status" value="1"/>
</dbReference>
<dbReference type="NCBIfam" id="TIGR01945">
    <property type="entry name" value="rnfC"/>
    <property type="match status" value="1"/>
</dbReference>
<dbReference type="PANTHER" id="PTHR43034">
    <property type="entry name" value="ION-TRANSLOCATING OXIDOREDUCTASE COMPLEX SUBUNIT C"/>
    <property type="match status" value="1"/>
</dbReference>
<dbReference type="PANTHER" id="PTHR43034:SF2">
    <property type="entry name" value="ION-TRANSLOCATING OXIDOREDUCTASE COMPLEX SUBUNIT C"/>
    <property type="match status" value="1"/>
</dbReference>
<dbReference type="Pfam" id="PF01512">
    <property type="entry name" value="Complex1_51K"/>
    <property type="match status" value="1"/>
</dbReference>
<dbReference type="Pfam" id="PF12838">
    <property type="entry name" value="Fer4_7"/>
    <property type="match status" value="1"/>
</dbReference>
<dbReference type="Pfam" id="PF13375">
    <property type="entry name" value="RnfC_N"/>
    <property type="match status" value="1"/>
</dbReference>
<dbReference type="SUPFAM" id="SSF46548">
    <property type="entry name" value="alpha-helical ferredoxin"/>
    <property type="match status" value="1"/>
</dbReference>
<dbReference type="SUPFAM" id="SSF142019">
    <property type="entry name" value="Nqo1 FMN-binding domain-like"/>
    <property type="match status" value="1"/>
</dbReference>
<dbReference type="PROSITE" id="PS00198">
    <property type="entry name" value="4FE4S_FER_1"/>
    <property type="match status" value="2"/>
</dbReference>
<dbReference type="PROSITE" id="PS51379">
    <property type="entry name" value="4FE4S_FER_2"/>
    <property type="match status" value="2"/>
</dbReference>
<sequence>MADVLSRFNSGKLWDFKGGIHPPEMKSQSNSQPLRHLPLGTDFYIPLKQHLGTTGNLLIKEGDYVLKGQALTKGDGLRMLPVHAPTSGTIKSIKPYVATHPSGLDEPTIHLQADGLDQWIERNPIDDFSTLSSEQLIHKIYQAGIAGLGGAVFPTAAKIQSAEQKVKLLIINGAECEPYITCDDRLMRERADEIIKGIRILRYILHPEKVVIAIEDNKPEAISAIRNALQGANDISIRVIPTKYPSGATKQLIYLLTGIEVPSGERSSSIGVLMQNVGTMFAIKRAIINDEPLIERVVTLTGNKIAEKGNYWVRLGTPISQILSDAGYQFDKHFPIFAGGPMMGLELPNLNAPVTKLVNCLLAPDYLEYAEPEAEQACIRCSSCSDACPVNLMPQQLYWFARSEDHKKSEEYALKDCIECGICAYVCPSHIPLIQYFRQEKAKIWQIKEKQKKSDEAKIRFEAKQARMEREEQERKARSQRAAQARREELAQTKGEDPVKAALERLKAKKANETESTQIKTLTSEKGEVLPDNTDLMAQRKARRLARQQAASQVENQEQQTQPTNAKKAAVAAALARAKAKKLAQANSTSEAISNSQTAENQVEKTKSAVEKTQENSTALDPKKAAVAAAIARAKAKKLAQTNSTSEAISNSQTAENEVEKTKSAVEKTEENSTALDAKKAAIAAAIARAKAKKLAQANSASEAISNSQTAENEVEKTKSAVEKTQQNSTALDPKKAAVAAAIARAKAKKLAQANSTSEAISNSQTAENEVEKTKSAVEKTQENSTALDPKKAAVAAAIARAKAKKLAKTQATLENNQE</sequence>
<comment type="function">
    <text evidence="1">Part of a membrane-bound complex that couples electron transfer with translocation of ions across the membrane.</text>
</comment>
<comment type="cofactor">
    <cofactor evidence="1">
        <name>[4Fe-4S] cluster</name>
        <dbReference type="ChEBI" id="CHEBI:49883"/>
    </cofactor>
    <text evidence="1">Binds 2 [4Fe-4S] clusters per subunit.</text>
</comment>
<comment type="subunit">
    <text evidence="1">The complex is composed of six subunits: RnfA, RnfB, RnfC, RnfD, RnfE and RnfG.</text>
</comment>
<comment type="subcellular location">
    <subcellularLocation>
        <location evidence="1">Cell inner membrane</location>
        <topology evidence="1">Peripheral membrane protein</topology>
    </subcellularLocation>
</comment>
<comment type="similarity">
    <text evidence="1">Belongs to the 4Fe4S bacterial-type ferredoxin family. RnfC subfamily.</text>
</comment>
<reference key="1">
    <citation type="journal article" date="1995" name="Science">
        <title>Whole-genome random sequencing and assembly of Haemophilus influenzae Rd.</title>
        <authorList>
            <person name="Fleischmann R.D."/>
            <person name="Adams M.D."/>
            <person name="White O."/>
            <person name="Clayton R.A."/>
            <person name="Kirkness E.F."/>
            <person name="Kerlavage A.R."/>
            <person name="Bult C.J."/>
            <person name="Tomb J.-F."/>
            <person name="Dougherty B.A."/>
            <person name="Merrick J.M."/>
            <person name="McKenney K."/>
            <person name="Sutton G.G."/>
            <person name="FitzHugh W."/>
            <person name="Fields C.A."/>
            <person name="Gocayne J.D."/>
            <person name="Scott J.D."/>
            <person name="Shirley R."/>
            <person name="Liu L.-I."/>
            <person name="Glodek A."/>
            <person name="Kelley J.M."/>
            <person name="Weidman J.F."/>
            <person name="Phillips C.A."/>
            <person name="Spriggs T."/>
            <person name="Hedblom E."/>
            <person name="Cotton M.D."/>
            <person name="Utterback T.R."/>
            <person name="Hanna M.C."/>
            <person name="Nguyen D.T."/>
            <person name="Saudek D.M."/>
            <person name="Brandon R.C."/>
            <person name="Fine L.D."/>
            <person name="Fritchman J.L."/>
            <person name="Fuhrmann J.L."/>
            <person name="Geoghagen N.S.M."/>
            <person name="Gnehm C.L."/>
            <person name="McDonald L.A."/>
            <person name="Small K.V."/>
            <person name="Fraser C.M."/>
            <person name="Smith H.O."/>
            <person name="Venter J.C."/>
        </authorList>
    </citation>
    <scope>NUCLEOTIDE SEQUENCE [LARGE SCALE GENOMIC DNA]</scope>
    <source>
        <strain>ATCC 51907 / DSM 11121 / KW20 / Rd</strain>
    </source>
</reference>
<name>RNFC_HAEIN</name>
<keyword id="KW-0004">4Fe-4S</keyword>
<keyword id="KW-0997">Cell inner membrane</keyword>
<keyword id="KW-1003">Cell membrane</keyword>
<keyword id="KW-0249">Electron transport</keyword>
<keyword id="KW-0408">Iron</keyword>
<keyword id="KW-0411">Iron-sulfur</keyword>
<keyword id="KW-0472">Membrane</keyword>
<keyword id="KW-0479">Metal-binding</keyword>
<keyword id="KW-1185">Reference proteome</keyword>
<keyword id="KW-0677">Repeat</keyword>
<keyword id="KW-1278">Translocase</keyword>
<keyword id="KW-0813">Transport</keyword>
<accession>P71397</accession>
<evidence type="ECO:0000255" key="1">
    <source>
        <dbReference type="HAMAP-Rule" id="MF_00461"/>
    </source>
</evidence>
<evidence type="ECO:0000256" key="2">
    <source>
        <dbReference type="SAM" id="MobiDB-lite"/>
    </source>
</evidence>
<gene>
    <name evidence="1" type="primary">rnfC</name>
    <name type="ordered locus">HI_1685</name>
</gene>
<feature type="chain" id="PRO_0000073208" description="Ion-translocating oxidoreductase complex subunit C">
    <location>
        <begin position="1"/>
        <end position="819"/>
    </location>
</feature>
<feature type="domain" description="4Fe-4S ferredoxin-type 1" evidence="1">
    <location>
        <begin position="368"/>
        <end position="398"/>
    </location>
</feature>
<feature type="domain" description="4Fe-4S ferredoxin-type 2" evidence="1">
    <location>
        <begin position="408"/>
        <end position="437"/>
    </location>
</feature>
<feature type="region of interest" description="Disordered" evidence="2">
    <location>
        <begin position="465"/>
        <end position="568"/>
    </location>
</feature>
<feature type="region of interest" description="Disordered" evidence="2">
    <location>
        <begin position="580"/>
        <end position="677"/>
    </location>
</feature>
<feature type="region of interest" description="Disordered" evidence="2">
    <location>
        <begin position="692"/>
        <end position="793"/>
    </location>
</feature>
<feature type="compositionally biased region" description="Basic and acidic residues" evidence="2">
    <location>
        <begin position="465"/>
        <end position="477"/>
    </location>
</feature>
<feature type="compositionally biased region" description="Basic and acidic residues" evidence="2">
    <location>
        <begin position="485"/>
        <end position="513"/>
    </location>
</feature>
<feature type="compositionally biased region" description="Polar residues" evidence="2">
    <location>
        <begin position="554"/>
        <end position="565"/>
    </location>
</feature>
<feature type="compositionally biased region" description="Polar residues" evidence="2">
    <location>
        <begin position="587"/>
        <end position="601"/>
    </location>
</feature>
<feature type="compositionally biased region" description="Basic and acidic residues" evidence="2">
    <location>
        <begin position="602"/>
        <end position="614"/>
    </location>
</feature>
<feature type="compositionally biased region" description="Polar residues" evidence="2">
    <location>
        <begin position="641"/>
        <end position="656"/>
    </location>
</feature>
<feature type="compositionally biased region" description="Basic and acidic residues" evidence="2">
    <location>
        <begin position="658"/>
        <end position="671"/>
    </location>
</feature>
<feature type="compositionally biased region" description="Polar residues" evidence="2">
    <location>
        <begin position="699"/>
        <end position="712"/>
    </location>
</feature>
<feature type="compositionally biased region" description="Polar residues" evidence="2">
    <location>
        <begin position="755"/>
        <end position="768"/>
    </location>
</feature>
<feature type="compositionally biased region" description="Basic and acidic residues" evidence="2">
    <location>
        <begin position="770"/>
        <end position="782"/>
    </location>
</feature>
<feature type="binding site" evidence="1">
    <location>
        <position position="378"/>
    </location>
    <ligand>
        <name>[4Fe-4S] cluster</name>
        <dbReference type="ChEBI" id="CHEBI:49883"/>
        <label>1</label>
    </ligand>
</feature>
<feature type="binding site" evidence="1">
    <location>
        <position position="381"/>
    </location>
    <ligand>
        <name>[4Fe-4S] cluster</name>
        <dbReference type="ChEBI" id="CHEBI:49883"/>
        <label>1</label>
    </ligand>
</feature>
<feature type="binding site" evidence="1">
    <location>
        <position position="384"/>
    </location>
    <ligand>
        <name>[4Fe-4S] cluster</name>
        <dbReference type="ChEBI" id="CHEBI:49883"/>
        <label>1</label>
    </ligand>
</feature>
<feature type="binding site" evidence="1">
    <location>
        <position position="388"/>
    </location>
    <ligand>
        <name>[4Fe-4S] cluster</name>
        <dbReference type="ChEBI" id="CHEBI:49883"/>
        <label>2</label>
    </ligand>
</feature>
<feature type="binding site" evidence="1">
    <location>
        <position position="417"/>
    </location>
    <ligand>
        <name>[4Fe-4S] cluster</name>
        <dbReference type="ChEBI" id="CHEBI:49883"/>
        <label>2</label>
    </ligand>
</feature>
<feature type="binding site" evidence="1">
    <location>
        <position position="420"/>
    </location>
    <ligand>
        <name>[4Fe-4S] cluster</name>
        <dbReference type="ChEBI" id="CHEBI:49883"/>
        <label>2</label>
    </ligand>
</feature>
<feature type="binding site" evidence="1">
    <location>
        <position position="423"/>
    </location>
    <ligand>
        <name>[4Fe-4S] cluster</name>
        <dbReference type="ChEBI" id="CHEBI:49883"/>
        <label>2</label>
    </ligand>
</feature>
<feature type="binding site" evidence="1">
    <location>
        <position position="427"/>
    </location>
    <ligand>
        <name>[4Fe-4S] cluster</name>
        <dbReference type="ChEBI" id="CHEBI:49883"/>
        <label>1</label>
    </ligand>
</feature>
<proteinExistence type="inferred from homology"/>
<protein>
    <recommendedName>
        <fullName evidence="1">Ion-translocating oxidoreductase complex subunit C</fullName>
        <ecNumber evidence="1">7.-.-.-</ecNumber>
    </recommendedName>
    <alternativeName>
        <fullName evidence="1">Rnf electron transport complex subunit C</fullName>
    </alternativeName>
</protein>
<organism>
    <name type="scientific">Haemophilus influenzae (strain ATCC 51907 / DSM 11121 / KW20 / Rd)</name>
    <dbReference type="NCBI Taxonomy" id="71421"/>
    <lineage>
        <taxon>Bacteria</taxon>
        <taxon>Pseudomonadati</taxon>
        <taxon>Pseudomonadota</taxon>
        <taxon>Gammaproteobacteria</taxon>
        <taxon>Pasteurellales</taxon>
        <taxon>Pasteurellaceae</taxon>
        <taxon>Haemophilus</taxon>
    </lineage>
</organism>